<evidence type="ECO:0000255" key="1">
    <source>
        <dbReference type="HAMAP-Rule" id="MF_00049"/>
    </source>
</evidence>
<evidence type="ECO:0000256" key="2">
    <source>
        <dbReference type="SAM" id="MobiDB-lite"/>
    </source>
</evidence>
<comment type="catalytic activity">
    <reaction evidence="1">
        <text>tRNA(Leu) + L-leucine + ATP = L-leucyl-tRNA(Leu) + AMP + diphosphate</text>
        <dbReference type="Rhea" id="RHEA:11688"/>
        <dbReference type="Rhea" id="RHEA-COMP:9613"/>
        <dbReference type="Rhea" id="RHEA-COMP:9622"/>
        <dbReference type="ChEBI" id="CHEBI:30616"/>
        <dbReference type="ChEBI" id="CHEBI:33019"/>
        <dbReference type="ChEBI" id="CHEBI:57427"/>
        <dbReference type="ChEBI" id="CHEBI:78442"/>
        <dbReference type="ChEBI" id="CHEBI:78494"/>
        <dbReference type="ChEBI" id="CHEBI:456215"/>
        <dbReference type="EC" id="6.1.1.4"/>
    </reaction>
</comment>
<comment type="subcellular location">
    <subcellularLocation>
        <location evidence="1">Cytoplasm</location>
    </subcellularLocation>
</comment>
<comment type="similarity">
    <text evidence="1">Belongs to the class-I aminoacyl-tRNA synthetase family.</text>
</comment>
<reference key="1">
    <citation type="submission" date="2006-12" db="EMBL/GenBank/DDBJ databases">
        <title>Complete sequence of Mycobacterium vanbaalenii PYR-1.</title>
        <authorList>
            <consortium name="US DOE Joint Genome Institute"/>
            <person name="Copeland A."/>
            <person name="Lucas S."/>
            <person name="Lapidus A."/>
            <person name="Barry K."/>
            <person name="Detter J.C."/>
            <person name="Glavina del Rio T."/>
            <person name="Hammon N."/>
            <person name="Israni S."/>
            <person name="Dalin E."/>
            <person name="Tice H."/>
            <person name="Pitluck S."/>
            <person name="Singan V."/>
            <person name="Schmutz J."/>
            <person name="Larimer F."/>
            <person name="Land M."/>
            <person name="Hauser L."/>
            <person name="Kyrpides N."/>
            <person name="Anderson I.J."/>
            <person name="Miller C."/>
            <person name="Richardson P."/>
        </authorList>
    </citation>
    <scope>NUCLEOTIDE SEQUENCE [LARGE SCALE GENOMIC DNA]</scope>
    <source>
        <strain>DSM 7251 / JCM 13017 / BCRC 16820 / KCTC 9966 / NRRL B-24157 / PYR-1</strain>
    </source>
</reference>
<organism>
    <name type="scientific">Mycolicibacterium vanbaalenii (strain DSM 7251 / JCM 13017 / BCRC 16820 / KCTC 9966 / NRRL B-24157 / PYR-1)</name>
    <name type="common">Mycobacterium vanbaalenii</name>
    <dbReference type="NCBI Taxonomy" id="350058"/>
    <lineage>
        <taxon>Bacteria</taxon>
        <taxon>Bacillati</taxon>
        <taxon>Actinomycetota</taxon>
        <taxon>Actinomycetes</taxon>
        <taxon>Mycobacteriales</taxon>
        <taxon>Mycobacteriaceae</taxon>
        <taxon>Mycolicibacterium</taxon>
    </lineage>
</organism>
<keyword id="KW-0030">Aminoacyl-tRNA synthetase</keyword>
<keyword id="KW-0067">ATP-binding</keyword>
<keyword id="KW-0963">Cytoplasm</keyword>
<keyword id="KW-0436">Ligase</keyword>
<keyword id="KW-0547">Nucleotide-binding</keyword>
<keyword id="KW-0648">Protein biosynthesis</keyword>
<protein>
    <recommendedName>
        <fullName evidence="1">Leucine--tRNA ligase</fullName>
        <ecNumber evidence="1">6.1.1.4</ecNumber>
    </recommendedName>
    <alternativeName>
        <fullName evidence="1">Leucyl-tRNA synthetase</fullName>
        <shortName evidence="1">LeuRS</shortName>
    </alternativeName>
</protein>
<accession>A1TI06</accession>
<dbReference type="EC" id="6.1.1.4" evidence="1"/>
<dbReference type="EMBL" id="CP000511">
    <property type="protein sequence ID" value="ABM16806.1"/>
    <property type="molecule type" value="Genomic_DNA"/>
</dbReference>
<dbReference type="RefSeq" id="WP_011783150.1">
    <property type="nucleotide sequence ID" value="NC_008726.1"/>
</dbReference>
<dbReference type="SMR" id="A1TI06"/>
<dbReference type="STRING" id="350058.Mvan_6054"/>
<dbReference type="KEGG" id="mva:Mvan_6054"/>
<dbReference type="eggNOG" id="COG0495">
    <property type="taxonomic scope" value="Bacteria"/>
</dbReference>
<dbReference type="HOGENOM" id="CLU_004427_0_0_11"/>
<dbReference type="Proteomes" id="UP000009159">
    <property type="component" value="Chromosome"/>
</dbReference>
<dbReference type="GO" id="GO:0005829">
    <property type="term" value="C:cytosol"/>
    <property type="evidence" value="ECO:0007669"/>
    <property type="project" value="TreeGrafter"/>
</dbReference>
<dbReference type="GO" id="GO:0002161">
    <property type="term" value="F:aminoacyl-tRNA deacylase activity"/>
    <property type="evidence" value="ECO:0007669"/>
    <property type="project" value="InterPro"/>
</dbReference>
<dbReference type="GO" id="GO:0005524">
    <property type="term" value="F:ATP binding"/>
    <property type="evidence" value="ECO:0007669"/>
    <property type="project" value="UniProtKB-UniRule"/>
</dbReference>
<dbReference type="GO" id="GO:0004823">
    <property type="term" value="F:leucine-tRNA ligase activity"/>
    <property type="evidence" value="ECO:0007669"/>
    <property type="project" value="UniProtKB-UniRule"/>
</dbReference>
<dbReference type="GO" id="GO:0006429">
    <property type="term" value="P:leucyl-tRNA aminoacylation"/>
    <property type="evidence" value="ECO:0007669"/>
    <property type="project" value="UniProtKB-UniRule"/>
</dbReference>
<dbReference type="CDD" id="cd07958">
    <property type="entry name" value="Anticodon_Ia_Leu_BEm"/>
    <property type="match status" value="1"/>
</dbReference>
<dbReference type="FunFam" id="3.10.20.590:FF:000001">
    <property type="entry name" value="Leucine--tRNA ligase"/>
    <property type="match status" value="1"/>
</dbReference>
<dbReference type="FunFam" id="3.40.50.620:FF:000056">
    <property type="entry name" value="Leucine--tRNA ligase"/>
    <property type="match status" value="1"/>
</dbReference>
<dbReference type="FunFam" id="3.40.50.620:FF:000060">
    <property type="entry name" value="Leucine--tRNA ligase"/>
    <property type="match status" value="1"/>
</dbReference>
<dbReference type="FunFam" id="3.40.50.620:FF:000087">
    <property type="entry name" value="Leucine--tRNA ligase"/>
    <property type="match status" value="1"/>
</dbReference>
<dbReference type="FunFam" id="3.90.740.10:FF:000017">
    <property type="entry name" value="Leucine--tRNA ligase"/>
    <property type="match status" value="1"/>
</dbReference>
<dbReference type="FunFam" id="1.10.730.10:FF:000011">
    <property type="entry name" value="Leucine--tRNA ligase chloroplastic/mitochondrial"/>
    <property type="match status" value="1"/>
</dbReference>
<dbReference type="Gene3D" id="3.40.50.620">
    <property type="entry name" value="HUPs"/>
    <property type="match status" value="3"/>
</dbReference>
<dbReference type="Gene3D" id="1.10.730.10">
    <property type="entry name" value="Isoleucyl-tRNA Synthetase, Domain 1"/>
    <property type="match status" value="1"/>
</dbReference>
<dbReference type="Gene3D" id="3.90.740.10">
    <property type="entry name" value="Valyl/Leucyl/Isoleucyl-tRNA synthetase, editing domain"/>
    <property type="match status" value="1"/>
</dbReference>
<dbReference type="HAMAP" id="MF_00049_B">
    <property type="entry name" value="Leu_tRNA_synth_B"/>
    <property type="match status" value="1"/>
</dbReference>
<dbReference type="InterPro" id="IPR001412">
    <property type="entry name" value="aa-tRNA-synth_I_CS"/>
</dbReference>
<dbReference type="InterPro" id="IPR002302">
    <property type="entry name" value="Leu-tRNA-ligase"/>
</dbReference>
<dbReference type="InterPro" id="IPR025709">
    <property type="entry name" value="Leu_tRNA-synth_edit"/>
</dbReference>
<dbReference type="InterPro" id="IPR013155">
    <property type="entry name" value="M/V/L/I-tRNA-synth_anticd-bd"/>
</dbReference>
<dbReference type="InterPro" id="IPR015413">
    <property type="entry name" value="Methionyl/Leucyl_tRNA_Synth"/>
</dbReference>
<dbReference type="InterPro" id="IPR014729">
    <property type="entry name" value="Rossmann-like_a/b/a_fold"/>
</dbReference>
<dbReference type="InterPro" id="IPR009080">
    <property type="entry name" value="tRNAsynth_Ia_anticodon-bd"/>
</dbReference>
<dbReference type="InterPro" id="IPR009008">
    <property type="entry name" value="Val/Leu/Ile-tRNA-synth_edit"/>
</dbReference>
<dbReference type="NCBIfam" id="TIGR00396">
    <property type="entry name" value="leuS_bact"/>
    <property type="match status" value="1"/>
</dbReference>
<dbReference type="PANTHER" id="PTHR43740:SF2">
    <property type="entry name" value="LEUCINE--TRNA LIGASE, MITOCHONDRIAL"/>
    <property type="match status" value="1"/>
</dbReference>
<dbReference type="PANTHER" id="PTHR43740">
    <property type="entry name" value="LEUCYL-TRNA SYNTHETASE"/>
    <property type="match status" value="1"/>
</dbReference>
<dbReference type="Pfam" id="PF08264">
    <property type="entry name" value="Anticodon_1"/>
    <property type="match status" value="1"/>
</dbReference>
<dbReference type="Pfam" id="PF13603">
    <property type="entry name" value="tRNA-synt_1_2"/>
    <property type="match status" value="1"/>
</dbReference>
<dbReference type="Pfam" id="PF09334">
    <property type="entry name" value="tRNA-synt_1g"/>
    <property type="match status" value="1"/>
</dbReference>
<dbReference type="PRINTS" id="PR00985">
    <property type="entry name" value="TRNASYNTHLEU"/>
</dbReference>
<dbReference type="SUPFAM" id="SSF47323">
    <property type="entry name" value="Anticodon-binding domain of a subclass of class I aminoacyl-tRNA synthetases"/>
    <property type="match status" value="1"/>
</dbReference>
<dbReference type="SUPFAM" id="SSF52374">
    <property type="entry name" value="Nucleotidylyl transferase"/>
    <property type="match status" value="1"/>
</dbReference>
<dbReference type="SUPFAM" id="SSF50677">
    <property type="entry name" value="ValRS/IleRS/LeuRS editing domain"/>
    <property type="match status" value="1"/>
</dbReference>
<dbReference type="PROSITE" id="PS00178">
    <property type="entry name" value="AA_TRNA_LIGASE_I"/>
    <property type="match status" value="1"/>
</dbReference>
<sequence>MTETPTGTQSSRETAADDTPRHRYTAGLAGEIERAWQQRWTQDGTFDVANPVGSLAPADGSAVPADKMFVQDMFPYPSGEGLHVGHPLGYIATDVYARYYRMTGRNVLHALGFDAFGLPAEQYAIQTGTHPRTRTEANIVNFRRQLGRLGLGHDSRRSFSTTDVDFYKWTQWIFLQIYNAWFDTAQNKARPVAELIAEFEAGTREVGDGRRWADLDAGERADVVDSRRLVYLADSVVNWCPGLGTVLANEEVTSDGRSERGNFPVFRKRLRQWMMRITAYSDRLLEDLDVLDWPDKVKTMQRNWIGRSTGASVEFGTDAGDIEVFTTRPDTLFGATYMVLAPEHDLVDRLVADQWPADVDARWTFGAATPREAVAAYRASIAAKSDLERQENKAKTGVFIGAYATNPANAKQVPVFIADYVLAGYGTGAIMAVPGGDQRDWDFATEFGLPIIEVVRPVADRPGEDTGAGGDVSQAAYTGDGVMVNSGFLDGMDVSAAKEAMTERLSADGRGRERVEYKLRDWLFARQRYWGEPFPIVYDADDRAHGLPEELLPVELPDVPDYSPVLFDPDDADSEPSPPLAKATEWVNVELDLGDGRKRYTRDTNVMPQWAGSSWYELRYADPHNTEALCAKENEAYWMGPRPAEHGPDDPGGVDLYVGGVEHAVLHLLYSRFWHKVLYDLGHVSSREPYRRLVNQGYIQAFAYTDARGSYVPAAEVVERDGKFFWPGPDGEIEVNQEFGKIGKSLKNSVSPDEICDDYGADTLRVYEMSMGPLEASRPWATKDVVGAHRFLQRVWRLVVSEETGETVVTDDALDEDTLRLLHRTIAGTADDYAALRNNTAAAKLIEYTNHLTKQSVTARAALEPLVLMVAPLAPHLAEELWRRLGHDASLAHGPFPVADERYLVEDTVEYPVQVNGKVRGRVTVAADAPADAVEAAALADDKVVAFLDGKTPKKVIVVAGRLVNVVL</sequence>
<gene>
    <name evidence="1" type="primary">leuS</name>
    <name type="ordered locus">Mvan_6054</name>
</gene>
<feature type="chain" id="PRO_0000334779" description="Leucine--tRNA ligase">
    <location>
        <begin position="1"/>
        <end position="968"/>
    </location>
</feature>
<feature type="region of interest" description="Disordered" evidence="2">
    <location>
        <begin position="1"/>
        <end position="22"/>
    </location>
</feature>
<feature type="short sequence motif" description="'HIGH' region">
    <location>
        <begin position="75"/>
        <end position="86"/>
    </location>
</feature>
<feature type="short sequence motif" description="'KMSKS' region">
    <location>
        <begin position="741"/>
        <end position="745"/>
    </location>
</feature>
<feature type="compositionally biased region" description="Polar residues" evidence="2">
    <location>
        <begin position="1"/>
        <end position="13"/>
    </location>
</feature>
<feature type="binding site" evidence="1">
    <location>
        <position position="744"/>
    </location>
    <ligand>
        <name>ATP</name>
        <dbReference type="ChEBI" id="CHEBI:30616"/>
    </ligand>
</feature>
<proteinExistence type="inferred from homology"/>
<name>SYL_MYCVP</name>